<organism>
    <name type="scientific">Yersinia enterocolitica serotype O:8 / biotype 1B (strain NCTC 13174 / 8081)</name>
    <dbReference type="NCBI Taxonomy" id="393305"/>
    <lineage>
        <taxon>Bacteria</taxon>
        <taxon>Pseudomonadati</taxon>
        <taxon>Pseudomonadota</taxon>
        <taxon>Gammaproteobacteria</taxon>
        <taxon>Enterobacterales</taxon>
        <taxon>Yersiniaceae</taxon>
        <taxon>Yersinia</taxon>
    </lineage>
</organism>
<reference key="1">
    <citation type="journal article" date="2006" name="PLoS Genet.">
        <title>The complete genome sequence and comparative genome analysis of the high pathogenicity Yersinia enterocolitica strain 8081.</title>
        <authorList>
            <person name="Thomson N.R."/>
            <person name="Howard S."/>
            <person name="Wren B.W."/>
            <person name="Holden M.T.G."/>
            <person name="Crossman L."/>
            <person name="Challis G.L."/>
            <person name="Churcher C."/>
            <person name="Mungall K."/>
            <person name="Brooks K."/>
            <person name="Chillingworth T."/>
            <person name="Feltwell T."/>
            <person name="Abdellah Z."/>
            <person name="Hauser H."/>
            <person name="Jagels K."/>
            <person name="Maddison M."/>
            <person name="Moule S."/>
            <person name="Sanders M."/>
            <person name="Whitehead S."/>
            <person name="Quail M.A."/>
            <person name="Dougan G."/>
            <person name="Parkhill J."/>
            <person name="Prentice M.B."/>
        </authorList>
    </citation>
    <scope>NUCLEOTIDE SEQUENCE [LARGE SCALE GENOMIC DNA]</scope>
    <source>
        <strain>NCTC 13174 / 8081</strain>
    </source>
</reference>
<gene>
    <name evidence="1" type="primary">viaA</name>
    <name type="ordered locus">YE0005</name>
</gene>
<dbReference type="EMBL" id="AM286415">
    <property type="protein sequence ID" value="CAL10150.1"/>
    <property type="molecule type" value="Genomic_DNA"/>
</dbReference>
<dbReference type="RefSeq" id="WP_011815251.1">
    <property type="nucleotide sequence ID" value="NC_008800.1"/>
</dbReference>
<dbReference type="RefSeq" id="YP_001004402.1">
    <property type="nucleotide sequence ID" value="NC_008800.1"/>
</dbReference>
<dbReference type="SMR" id="A1JHR3"/>
<dbReference type="KEGG" id="yen:YE0005"/>
<dbReference type="PATRIC" id="fig|393305.7.peg.94"/>
<dbReference type="eggNOG" id="COG2425">
    <property type="taxonomic scope" value="Bacteria"/>
</dbReference>
<dbReference type="HOGENOM" id="CLU_022130_0_0_6"/>
<dbReference type="OrthoDB" id="387240at2"/>
<dbReference type="Proteomes" id="UP000000642">
    <property type="component" value="Chromosome"/>
</dbReference>
<dbReference type="GO" id="GO:0005829">
    <property type="term" value="C:cytosol"/>
    <property type="evidence" value="ECO:0007669"/>
    <property type="project" value="TreeGrafter"/>
</dbReference>
<dbReference type="CDD" id="cd01462">
    <property type="entry name" value="VWA_YIEM_type"/>
    <property type="match status" value="1"/>
</dbReference>
<dbReference type="Gene3D" id="3.40.50.410">
    <property type="entry name" value="von Willebrand factor, type A domain"/>
    <property type="match status" value="1"/>
</dbReference>
<dbReference type="HAMAP" id="MF_01626">
    <property type="entry name" value="ViaA"/>
    <property type="match status" value="1"/>
</dbReference>
<dbReference type="InterPro" id="IPR008912">
    <property type="entry name" value="Uncharacterised_CoxE"/>
</dbReference>
<dbReference type="InterPro" id="IPR023481">
    <property type="entry name" value="Uncharacterised_ViaA"/>
</dbReference>
<dbReference type="InterPro" id="IPR002035">
    <property type="entry name" value="VWF_A"/>
</dbReference>
<dbReference type="InterPro" id="IPR036465">
    <property type="entry name" value="vWFA_dom_sf"/>
</dbReference>
<dbReference type="NCBIfam" id="NF008230">
    <property type="entry name" value="PRK10997.1"/>
    <property type="match status" value="1"/>
</dbReference>
<dbReference type="PANTHER" id="PTHR36846">
    <property type="entry name" value="PROTEIN VIAA"/>
    <property type="match status" value="1"/>
</dbReference>
<dbReference type="PANTHER" id="PTHR36846:SF1">
    <property type="entry name" value="PROTEIN VIAA"/>
    <property type="match status" value="1"/>
</dbReference>
<dbReference type="Pfam" id="PF05762">
    <property type="entry name" value="VWA_CoxE"/>
    <property type="match status" value="1"/>
</dbReference>
<dbReference type="SMART" id="SM00327">
    <property type="entry name" value="VWA"/>
    <property type="match status" value="1"/>
</dbReference>
<dbReference type="SUPFAM" id="SSF53300">
    <property type="entry name" value="vWA-like"/>
    <property type="match status" value="1"/>
</dbReference>
<sequence length="488" mass="56218">MLSLATLDLLLSISESELIEEMVVGLLASPQLAIFFEKFPRIKRALMKDIPGWKQNLQQRIREAKVPAGLANEFALYQQSQLEDSPLFYAHLPQIVVQLQQWHSPFATQAKTLLHTADLERNPQTGDSFQTLFLQRWRVSLTLQTITIHHQLLEQEREQLLAELQQRLALSGALEPILATNDGAAGRLWDMSQGHLQRGDYQLLLQYGDFLQQQPELQQLAEQLGRSRSAKAQPTPDARFEPYTVMVRQPDTVPEEVSGIHQSNDILRLLPTELVMLGMSELEFEFYRRLLERRLLTYRLQGDNWQEKTLQRPISLKSHDEQPRGPFIVCVDTSGSMGGFSEQCAKAFCLALLRIALEDNRRCYIMLFATEIIHYELSSASGIEQAIRFLSQHFRGGTDLAACLSSTLSKMEERDWYDADAVIISDFIAQRLPEELIRKIKIQQQAHQHRFHAVAMSAYGKPGIMRIFDHIWRFDTGLKSRLIRRWKR</sequence>
<keyword id="KW-0143">Chaperone</keyword>
<keyword id="KW-0963">Cytoplasm</keyword>
<accession>A1JHR3</accession>
<comment type="function">
    <text evidence="1">Component of the RavA-ViaA chaperone complex, which may act on the membrane to optimize the function of some of the respiratory chains. ViaA stimulates the ATPase activity of RavA.</text>
</comment>
<comment type="subunit">
    <text evidence="1">Homodimer. Interacts with RavA.</text>
</comment>
<comment type="subcellular location">
    <subcellularLocation>
        <location evidence="1">Cytoplasm</location>
    </subcellularLocation>
</comment>
<comment type="similarity">
    <text evidence="1">Belongs to the ViaA family.</text>
</comment>
<protein>
    <recommendedName>
        <fullName evidence="1">Regulatory protein ViaA</fullName>
    </recommendedName>
    <alternativeName>
        <fullName evidence="1">VWA interacting with AAA+ ATPase</fullName>
    </alternativeName>
</protein>
<evidence type="ECO:0000255" key="1">
    <source>
        <dbReference type="HAMAP-Rule" id="MF_01626"/>
    </source>
</evidence>
<feature type="chain" id="PRO_1000069611" description="Regulatory protein ViaA">
    <location>
        <begin position="1"/>
        <end position="488"/>
    </location>
</feature>
<name>VIAA_YERE8</name>
<proteinExistence type="inferred from homology"/>